<sequence>MREILHIQGGQCGNQIGAKFWEVICDEHGIDGTGRYAGDSDLQLERINVYYNEASGGRFVPRAVLMDLEPGTMDSVRSGPFGQIFRPDNFVFGQSGAGNNWAKGHYTEGAELIDSVLDVVRKEAENCDCLQGFQVCHSLGGGTGSGMGTLLISKIREEYPDRMMLTFSVFPSPKVSDTVVEPYNATLSVHQLVENADECMVLDNEALYDICFRTLKLATPSFGELNHLISATMSGVTCCLRFPGQLNSDLRKLAVNLIPFPRLHFFMVGFAPLTSRGSQMYRALTVPELTQQMWDAKNMMCAADPRHGRYLTASACFRGKMSTKEVDEQMLNVQNKNSSYFVEWIPNNVKSSVCDMPPRGLKMAGTFVGNSTSIQEMFRRVSEQFTAMFRRKAFLHWYTGEGMDEMEFTEAESNMNDLVAEYQQYQDATADEEYDEEEEEERDAE</sequence>
<feature type="chain" id="PRO_0000048388" description="Tubulin beta-4 chain">
    <location>
        <begin position="1"/>
        <end position="445"/>
    </location>
</feature>
<feature type="region of interest" description="Disordered" evidence="3">
    <location>
        <begin position="421"/>
        <end position="445"/>
    </location>
</feature>
<feature type="compositionally biased region" description="Acidic residues" evidence="3">
    <location>
        <begin position="429"/>
        <end position="445"/>
    </location>
</feature>
<feature type="binding site" evidence="2">
    <location>
        <position position="11"/>
    </location>
    <ligand>
        <name>GTP</name>
        <dbReference type="ChEBI" id="CHEBI:37565"/>
    </ligand>
</feature>
<feature type="binding site" evidence="1">
    <location>
        <position position="69"/>
    </location>
    <ligand>
        <name>GTP</name>
        <dbReference type="ChEBI" id="CHEBI:37565"/>
    </ligand>
</feature>
<feature type="binding site" evidence="1">
    <location>
        <position position="69"/>
    </location>
    <ligand>
        <name>Mg(2+)</name>
        <dbReference type="ChEBI" id="CHEBI:18420"/>
    </ligand>
</feature>
<feature type="binding site" evidence="2">
    <location>
        <position position="138"/>
    </location>
    <ligand>
        <name>GTP</name>
        <dbReference type="ChEBI" id="CHEBI:37565"/>
    </ligand>
</feature>
<feature type="binding site" evidence="2">
    <location>
        <position position="142"/>
    </location>
    <ligand>
        <name>GTP</name>
        <dbReference type="ChEBI" id="CHEBI:37565"/>
    </ligand>
</feature>
<feature type="binding site" evidence="2">
    <location>
        <position position="143"/>
    </location>
    <ligand>
        <name>GTP</name>
        <dbReference type="ChEBI" id="CHEBI:37565"/>
    </ligand>
</feature>
<feature type="binding site" evidence="2">
    <location>
        <position position="144"/>
    </location>
    <ligand>
        <name>GTP</name>
        <dbReference type="ChEBI" id="CHEBI:37565"/>
    </ligand>
</feature>
<feature type="binding site" evidence="2">
    <location>
        <position position="204"/>
    </location>
    <ligand>
        <name>GTP</name>
        <dbReference type="ChEBI" id="CHEBI:37565"/>
    </ligand>
</feature>
<feature type="binding site" evidence="2">
    <location>
        <position position="226"/>
    </location>
    <ligand>
        <name>GTP</name>
        <dbReference type="ChEBI" id="CHEBI:37565"/>
    </ligand>
</feature>
<gene>
    <name type="primary">TUBB4</name>
</gene>
<evidence type="ECO:0000250" key="1">
    <source>
        <dbReference type="UniProtKB" id="P68363"/>
    </source>
</evidence>
<evidence type="ECO:0000250" key="2">
    <source>
        <dbReference type="UniProtKB" id="Q13509"/>
    </source>
</evidence>
<evidence type="ECO:0000256" key="3">
    <source>
        <dbReference type="SAM" id="MobiDB-lite"/>
    </source>
</evidence>
<evidence type="ECO:0000305" key="4"/>
<accession>Q9ZRA9</accession>
<comment type="function">
    <text>Tubulin is the major constituent of microtubules, a cylinder consisting of laterally associated linear protofilaments composed of alpha- and beta-tubulin heterodimers. Microtubules grow by the addition of GTP-tubulin dimers to the microtubule end, where a stabilizing cap forms. Below the cap, tubulin dimers are in GDP-bound state, owing to GTPase activity of alpha-tubulin.</text>
</comment>
<comment type="cofactor">
    <cofactor evidence="1">
        <name>Mg(2+)</name>
        <dbReference type="ChEBI" id="CHEBI:18420"/>
    </cofactor>
</comment>
<comment type="subunit">
    <text>Dimer of alpha and beta chains. A typical microtubule is a hollow water-filled tube with an outer diameter of 25 nm and an inner diameter of 15 nM. Alpha-beta heterodimers associate head-to-tail to form protofilaments running lengthwise along the microtubule wall with the beta-tubulin subunit facing the microtubule plus end conferring a structural polarity. Microtubules usually have 13 protofilaments but different protofilament numbers can be found in some organisms and specialized cells.</text>
</comment>
<comment type="subcellular location">
    <subcellularLocation>
        <location>Cytoplasm</location>
        <location>Cytoskeleton</location>
    </subcellularLocation>
</comment>
<comment type="similarity">
    <text evidence="4">Belongs to the tubulin family.</text>
</comment>
<protein>
    <recommendedName>
        <fullName>Tubulin beta-4 chain</fullName>
    </recommendedName>
    <alternativeName>
        <fullName>Beta-4-tubulin</fullName>
    </alternativeName>
</protein>
<dbReference type="EMBL" id="U76895">
    <property type="protein sequence ID" value="AAD10490.1"/>
    <property type="molecule type" value="mRNA"/>
</dbReference>
<dbReference type="SMR" id="Q9ZRA9"/>
<dbReference type="STRING" id="4565.Q9ZRA9"/>
<dbReference type="PaxDb" id="4565-Traes_5BL_EBD050E21.2"/>
<dbReference type="eggNOG" id="KOG1375">
    <property type="taxonomic scope" value="Eukaryota"/>
</dbReference>
<dbReference type="Proteomes" id="UP000019116">
    <property type="component" value="Unplaced"/>
</dbReference>
<dbReference type="ExpressionAtlas" id="Q9ZRA9">
    <property type="expression patterns" value="baseline and differential"/>
</dbReference>
<dbReference type="GO" id="GO:0005737">
    <property type="term" value="C:cytoplasm"/>
    <property type="evidence" value="ECO:0000318"/>
    <property type="project" value="GO_Central"/>
</dbReference>
<dbReference type="GO" id="GO:0005874">
    <property type="term" value="C:microtubule"/>
    <property type="evidence" value="ECO:0000318"/>
    <property type="project" value="GO_Central"/>
</dbReference>
<dbReference type="GO" id="GO:0005525">
    <property type="term" value="F:GTP binding"/>
    <property type="evidence" value="ECO:0000318"/>
    <property type="project" value="GO_Central"/>
</dbReference>
<dbReference type="GO" id="GO:0003924">
    <property type="term" value="F:GTPase activity"/>
    <property type="evidence" value="ECO:0007669"/>
    <property type="project" value="InterPro"/>
</dbReference>
<dbReference type="GO" id="GO:0046872">
    <property type="term" value="F:metal ion binding"/>
    <property type="evidence" value="ECO:0007669"/>
    <property type="project" value="UniProtKB-KW"/>
</dbReference>
<dbReference type="GO" id="GO:0005200">
    <property type="term" value="F:structural constituent of cytoskeleton"/>
    <property type="evidence" value="ECO:0000318"/>
    <property type="project" value="GO_Central"/>
</dbReference>
<dbReference type="GO" id="GO:0000226">
    <property type="term" value="P:microtubule cytoskeleton organization"/>
    <property type="evidence" value="ECO:0000318"/>
    <property type="project" value="GO_Central"/>
</dbReference>
<dbReference type="GO" id="GO:0000278">
    <property type="term" value="P:mitotic cell cycle"/>
    <property type="evidence" value="ECO:0000318"/>
    <property type="project" value="GO_Central"/>
</dbReference>
<dbReference type="CDD" id="cd02187">
    <property type="entry name" value="beta_tubulin"/>
    <property type="match status" value="1"/>
</dbReference>
<dbReference type="FunFam" id="1.10.287.600:FF:000002">
    <property type="entry name" value="Tubulin beta chain"/>
    <property type="match status" value="1"/>
</dbReference>
<dbReference type="FunFam" id="3.30.1330.20:FF:000002">
    <property type="entry name" value="Tubulin beta chain"/>
    <property type="match status" value="1"/>
</dbReference>
<dbReference type="FunFam" id="3.40.50.1440:FF:000005">
    <property type="entry name" value="Tubulin beta chain"/>
    <property type="match status" value="1"/>
</dbReference>
<dbReference type="Gene3D" id="1.10.287.600">
    <property type="entry name" value="Helix hairpin bin"/>
    <property type="match status" value="1"/>
</dbReference>
<dbReference type="Gene3D" id="3.30.1330.20">
    <property type="entry name" value="Tubulin/FtsZ, C-terminal domain"/>
    <property type="match status" value="1"/>
</dbReference>
<dbReference type="Gene3D" id="3.40.50.1440">
    <property type="entry name" value="Tubulin/FtsZ, GTPase domain"/>
    <property type="match status" value="1"/>
</dbReference>
<dbReference type="InterPro" id="IPR013838">
    <property type="entry name" value="Beta-tubulin_BS"/>
</dbReference>
<dbReference type="InterPro" id="IPR002453">
    <property type="entry name" value="Beta_tubulin"/>
</dbReference>
<dbReference type="InterPro" id="IPR008280">
    <property type="entry name" value="Tub_FtsZ_C"/>
</dbReference>
<dbReference type="InterPro" id="IPR000217">
    <property type="entry name" value="Tubulin"/>
</dbReference>
<dbReference type="InterPro" id="IPR037103">
    <property type="entry name" value="Tubulin/FtsZ-like_C"/>
</dbReference>
<dbReference type="InterPro" id="IPR018316">
    <property type="entry name" value="Tubulin/FtsZ_2-layer-sand-dom"/>
</dbReference>
<dbReference type="InterPro" id="IPR036525">
    <property type="entry name" value="Tubulin/FtsZ_GTPase_sf"/>
</dbReference>
<dbReference type="InterPro" id="IPR023123">
    <property type="entry name" value="Tubulin_C"/>
</dbReference>
<dbReference type="InterPro" id="IPR017975">
    <property type="entry name" value="Tubulin_CS"/>
</dbReference>
<dbReference type="InterPro" id="IPR003008">
    <property type="entry name" value="Tubulin_FtsZ_GTPase"/>
</dbReference>
<dbReference type="PANTHER" id="PTHR11588">
    <property type="entry name" value="TUBULIN"/>
    <property type="match status" value="1"/>
</dbReference>
<dbReference type="Pfam" id="PF00091">
    <property type="entry name" value="Tubulin"/>
    <property type="match status" value="1"/>
</dbReference>
<dbReference type="Pfam" id="PF03953">
    <property type="entry name" value="Tubulin_C"/>
    <property type="match status" value="1"/>
</dbReference>
<dbReference type="PRINTS" id="PR01163">
    <property type="entry name" value="BETATUBULIN"/>
</dbReference>
<dbReference type="PRINTS" id="PR01161">
    <property type="entry name" value="TUBULIN"/>
</dbReference>
<dbReference type="SMART" id="SM00864">
    <property type="entry name" value="Tubulin"/>
    <property type="match status" value="1"/>
</dbReference>
<dbReference type="SMART" id="SM00865">
    <property type="entry name" value="Tubulin_C"/>
    <property type="match status" value="1"/>
</dbReference>
<dbReference type="SUPFAM" id="SSF55307">
    <property type="entry name" value="Tubulin C-terminal domain-like"/>
    <property type="match status" value="1"/>
</dbReference>
<dbReference type="SUPFAM" id="SSF52490">
    <property type="entry name" value="Tubulin nucleotide-binding domain-like"/>
    <property type="match status" value="1"/>
</dbReference>
<dbReference type="PROSITE" id="PS00227">
    <property type="entry name" value="TUBULIN"/>
    <property type="match status" value="1"/>
</dbReference>
<dbReference type="PROSITE" id="PS00228">
    <property type="entry name" value="TUBULIN_B_AUTOREG"/>
    <property type="match status" value="1"/>
</dbReference>
<reference key="1">
    <citation type="submission" date="1996-11" db="EMBL/GenBank/DDBJ databases">
        <title>Tubb4, a beta-tubulin cDNA from common wheat.</title>
        <authorList>
            <person name="Segal G."/>
            <person name="Feldman M."/>
        </authorList>
    </citation>
    <scope>NUCLEOTIDE SEQUENCE [MRNA]</scope>
    <source>
        <strain>cv. Chinese Spring</strain>
        <tissue>Root tip</tissue>
    </source>
</reference>
<keyword id="KW-0963">Cytoplasm</keyword>
<keyword id="KW-0206">Cytoskeleton</keyword>
<keyword id="KW-0342">GTP-binding</keyword>
<keyword id="KW-0460">Magnesium</keyword>
<keyword id="KW-0479">Metal-binding</keyword>
<keyword id="KW-0493">Microtubule</keyword>
<keyword id="KW-0547">Nucleotide-binding</keyword>
<keyword id="KW-1185">Reference proteome</keyword>
<proteinExistence type="evidence at transcript level"/>
<name>TBB4_WHEAT</name>
<organism>
    <name type="scientific">Triticum aestivum</name>
    <name type="common">Wheat</name>
    <dbReference type="NCBI Taxonomy" id="4565"/>
    <lineage>
        <taxon>Eukaryota</taxon>
        <taxon>Viridiplantae</taxon>
        <taxon>Streptophyta</taxon>
        <taxon>Embryophyta</taxon>
        <taxon>Tracheophyta</taxon>
        <taxon>Spermatophyta</taxon>
        <taxon>Magnoliopsida</taxon>
        <taxon>Liliopsida</taxon>
        <taxon>Poales</taxon>
        <taxon>Poaceae</taxon>
        <taxon>BOP clade</taxon>
        <taxon>Pooideae</taxon>
        <taxon>Triticodae</taxon>
        <taxon>Triticeae</taxon>
        <taxon>Triticinae</taxon>
        <taxon>Triticum</taxon>
    </lineage>
</organism>